<keyword id="KW-1003">Cell membrane</keyword>
<keyword id="KW-0165">Cleavage on pair of basic residues</keyword>
<keyword id="KW-0903">Direct protein sequencing</keyword>
<keyword id="KW-1015">Disulfide bond</keyword>
<keyword id="KW-0272">Extracellular matrix</keyword>
<keyword id="KW-0278">Fertilization</keyword>
<keyword id="KW-0325">Glycoprotein</keyword>
<keyword id="KW-0472">Membrane</keyword>
<keyword id="KW-0675">Receptor</keyword>
<keyword id="KW-1185">Reference proteome</keyword>
<keyword id="KW-0964">Secreted</keyword>
<keyword id="KW-0732">Signal</keyword>
<keyword id="KW-0812">Transmembrane</keyword>
<keyword id="KW-1133">Transmembrane helix</keyword>
<proteinExistence type="evidence at protein level"/>
<protein>
    <recommendedName>
        <fullName>Zona pellucida sperm-binding protein 4</fullName>
    </recommendedName>
    <alternativeName>
        <fullName>Zona pellucida glycoprotein 3-alpha</fullName>
        <shortName>Zp-3-alpha</shortName>
        <shortName>Zp3-alpha</shortName>
    </alternativeName>
    <alternativeName>
        <fullName>Zona pellucida glycoprotein 4</fullName>
        <shortName>Zp-4</shortName>
    </alternativeName>
    <alternativeName>
        <fullName>Zona pellucida protein B</fullName>
    </alternativeName>
    <component>
        <recommendedName>
            <fullName>Processed zona pellucida sperm-binding protein 4</fullName>
        </recommendedName>
    </component>
</protein>
<evidence type="ECO:0000250" key="1">
    <source>
        <dbReference type="UniProtKB" id="Q00193"/>
    </source>
</evidence>
<evidence type="ECO:0000255" key="2"/>
<evidence type="ECO:0000255" key="3">
    <source>
        <dbReference type="PROSITE-ProRule" id="PRU00375"/>
    </source>
</evidence>
<evidence type="ECO:0000255" key="4">
    <source>
        <dbReference type="PROSITE-ProRule" id="PRU00779"/>
    </source>
</evidence>
<evidence type="ECO:0000269" key="5">
    <source>
    </source>
</evidence>
<evidence type="ECO:0000269" key="6">
    <source>
    </source>
</evidence>
<evidence type="ECO:0000269" key="7">
    <source>
    </source>
</evidence>
<evidence type="ECO:0000305" key="8"/>
<comment type="function">
    <text>Component of the zona pellucida, an extracellular matrix surrounding oocytes which mediates sperm binding, induction of the acrosome reaction and prevents post-fertilization polyspermy. The zona pellucida is composed of 3 to 4 glycoproteins, ZP1, ZP2, ZP3, and ZP4. ZP4 may act as a sperm receptor.</text>
</comment>
<comment type="subcellular location">
    <molecule>Processed zona pellucida sperm-binding protein 4</molecule>
    <subcellularLocation>
        <location evidence="1">Zona pellucida</location>
    </subcellularLocation>
</comment>
<comment type="subcellular location">
    <subcellularLocation>
        <location evidence="1">Cell membrane</location>
        <topology evidence="2">Single-pass type I membrane protein</topology>
    </subcellularLocation>
</comment>
<comment type="tissue specificity">
    <text>Expressed in oocytes.</text>
</comment>
<comment type="domain">
    <text>The ZP domain is involved in the polymerization of the ZP proteins to form the zona pellucida.</text>
</comment>
<comment type="PTM">
    <text evidence="5">Proteolytically cleaved before the transmembrane segment to yield the secreted ectodomain incorporated in the zona pellucida.</text>
</comment>
<comment type="PTM">
    <text>Disulfide bonds are formed between the cysteines of three consecutive regions: Cys-368 and Cys-389, Cys-442 and Cys-447, Cys-455 and Cys-459.</text>
</comment>
<comment type="PTM">
    <text>N-glycosylated; contains bi-, tri- and tetra-antennary glycans with N-acetyllactosamine repeats.</text>
</comment>
<comment type="PTM">
    <text>O-glycosylated; contains sulfate-substituted glycans.</text>
</comment>
<comment type="similarity">
    <text evidence="8">Belongs to the ZP domain family. ZPB subfamily.</text>
</comment>
<name>ZP4_PIG</name>
<gene>
    <name type="primary">ZP4</name>
    <name type="synonym">ZP3A</name>
    <name type="synonym">ZPB</name>
</gene>
<sequence length="536" mass="59334">MWLRPSIWLCFPLCLALPGQSQPKAADDLGGLYCGPSSFHFSINLLSQDTATPPALVVWDRRGRLHKLQNDSGCGTWVHKGPGSSMGVEASYRGCYVTEWDSHYLMPIGLEEADAGGHRTVTETKLFKCPVDFLALDVPTIGLCDAVPVWDRLPCAPPPITQGECKQLGCCYNSEEVPSCYYGNTVTSRCTQDGHFSIAVSRNVTSPPLLWDSVHLAFRNDSECKPVMETHTFVLFRFPFSSCGTAKRVTGNQAVYENELVAARDVRTWSHGSITRDSIFRLRVSCIYSVSSSALPVNIQVFTLPPPLPETHPGPLTLELQIAKDERYGSYYNASDYPVVKLLREPIYVEVSIRHRTDPSLGLHLHQCWATPGMSPLLQPQWPMLVNGCPYTGDNYQTKLIPVQKASNLLFPSHYQRFSVSTFSFVDSVAKQALKGPVYLHCTASVCKPAGAPICVTTCPAARRRRSSDIHFQNGTASISSKGPMILLQATRDSSERLHKYSRPPVDSHALWVAGLLGSLIIGALLVSYLVFRKWR</sequence>
<reference key="1">
    <citation type="journal article" date="1993" name="Biochim. Biophys. Acta">
        <title>Nucleotide sequence of cDNA encoding ZP3 alpha, a sperm-binding glycoprotein from zona pellucida of pig oocyte.</title>
        <authorList>
            <person name="Yurewicz E.C."/>
            <person name="Hibler D."/>
            <person name="Fontenot G.K."/>
            <person name="Sacco A.G."/>
            <person name="Harris J."/>
        </authorList>
    </citation>
    <scope>NUCLEOTIDE SEQUENCE [MRNA]</scope>
    <source>
        <tissue>Ovary</tissue>
    </source>
</reference>
<reference key="2">
    <citation type="journal article" date="1987" name="J. Biol. Chem.">
        <title>Biochemical research on oogenesis. Binding of tRNA to the nucleoprotein particles of Xenopus laevis previtellogenic oocytes.</title>
        <authorList>
            <person name="Yurewicz E.C."/>
            <person name="Sacco A.G."/>
            <person name="Subramanian M.G."/>
        </authorList>
    </citation>
    <scope>PROTEIN SEQUENCE OF 137-158</scope>
</reference>
<reference key="3">
    <citation type="journal article" date="1992" name="Mol. Reprod. Dev.">
        <title>Porcine oocyte zona pellucida M(r) 55,000 glycoproteins: identification of O-glycosylated domains.</title>
        <authorList>
            <person name="Yurewicz E.C."/>
            <person name="Pack B.A."/>
            <person name="Sacco A.G."/>
        </authorList>
    </citation>
    <scope>PROTEIN SEQUENCE OF 284-318</scope>
    <scope>GLYCOSYLATION</scope>
</reference>
<reference key="4">
    <citation type="journal article" date="1998" name="Eur. J. Biochem.">
        <title>Localization of carbohydrate chains of pig sperm ligand in the glycoprotein ZPB of egg zona pellucida.</title>
        <authorList>
            <person name="Kudo K."/>
            <person name="Yonezawa N."/>
            <person name="Katsumata T."/>
            <person name="Aoki H."/>
            <person name="Nakano M."/>
        </authorList>
    </citation>
    <scope>GLYCOSYLATION AT ASN-203; ASN-220 AND ASN-333</scope>
</reference>
<reference key="5">
    <citation type="journal article" date="2003" name="Biochem. Biophys. Res. Commun.">
        <title>Identification of the carboxyl termini of porcine zona pellucida glycoproteins ZPB and ZPC.</title>
        <authorList>
            <person name="Yonezawa N."/>
            <person name="Nakano M."/>
        </authorList>
    </citation>
    <scope>PROTEOLYTIC PROCESSING</scope>
</reference>
<accession>Q07287</accession>
<organism>
    <name type="scientific">Sus scrofa</name>
    <name type="common">Pig</name>
    <dbReference type="NCBI Taxonomy" id="9823"/>
    <lineage>
        <taxon>Eukaryota</taxon>
        <taxon>Metazoa</taxon>
        <taxon>Chordata</taxon>
        <taxon>Craniata</taxon>
        <taxon>Vertebrata</taxon>
        <taxon>Euteleostomi</taxon>
        <taxon>Mammalia</taxon>
        <taxon>Eutheria</taxon>
        <taxon>Laurasiatheria</taxon>
        <taxon>Artiodactyla</taxon>
        <taxon>Suina</taxon>
        <taxon>Suidae</taxon>
        <taxon>Sus</taxon>
    </lineage>
</organism>
<feature type="signal peptide" evidence="2">
    <location>
        <begin position="1"/>
        <end position="21"/>
    </location>
</feature>
<feature type="chain" id="PRO_0000041729" description="Zona pellucida sperm-binding protein 4">
    <location>
        <begin position="22"/>
        <end position="462"/>
    </location>
</feature>
<feature type="chain" id="PRO_0000304579" description="Processed zona pellucida sperm-binding protein 4">
    <location>
        <begin position="22"/>
        <end status="unknown"/>
    </location>
</feature>
<feature type="propeptide" id="PRO_0000041730" description="Removed in mature form">
    <location>
        <begin position="463"/>
        <end position="536"/>
    </location>
</feature>
<feature type="topological domain" description="Extracellular" evidence="2">
    <location>
        <begin position="22"/>
        <end position="511"/>
    </location>
</feature>
<feature type="transmembrane region" description="Helical" evidence="2">
    <location>
        <begin position="512"/>
        <end position="532"/>
    </location>
</feature>
<feature type="topological domain" description="Cytoplasmic" evidence="2">
    <location>
        <begin position="533"/>
        <end position="536"/>
    </location>
</feature>
<feature type="domain" description="P-type" evidence="4">
    <location>
        <begin position="142"/>
        <end position="184"/>
    </location>
</feature>
<feature type="domain" description="ZP" evidence="3">
    <location>
        <begin position="189"/>
        <end position="462"/>
    </location>
</feature>
<feature type="glycosylation site" description="N-linked (GlcNAc...) asparagine" evidence="2">
    <location>
        <position position="70"/>
    </location>
</feature>
<feature type="glycosylation site" description="N-linked (GlcNAc...) asparagine" evidence="7">
    <location>
        <position position="203"/>
    </location>
</feature>
<feature type="glycosylation site" description="N-linked (GlcNAc...) asparagine" evidence="7">
    <location>
        <position position="220"/>
    </location>
</feature>
<feature type="glycosylation site" description="O-linked (GalNAc...) serine" evidence="6">
    <location>
        <position position="293"/>
    </location>
</feature>
<feature type="glycosylation site" description="O-linked (GalNAc...) threonine" evidence="6">
    <location>
        <position position="303"/>
    </location>
</feature>
<feature type="glycosylation site" description="N-linked (GlcNAc...) asparagine" evidence="7">
    <location>
        <position position="333"/>
    </location>
</feature>
<feature type="glycosylation site" description="N-linked (GlcNAc...) asparagine" evidence="2">
    <location>
        <position position="474"/>
    </location>
</feature>
<feature type="disulfide bond" evidence="4">
    <location>
        <begin position="368"/>
        <end position="442"/>
    </location>
</feature>
<dbReference type="EMBL" id="L11000">
    <property type="protein sequence ID" value="AAA50164.1"/>
    <property type="molecule type" value="mRNA"/>
</dbReference>
<dbReference type="PIR" id="S35712">
    <property type="entry name" value="S35712"/>
</dbReference>
<dbReference type="RefSeq" id="NP_999210.1">
    <property type="nucleotide sequence ID" value="NM_214045.1"/>
</dbReference>
<dbReference type="SMR" id="Q07287"/>
<dbReference type="BioGRID" id="1149246">
    <property type="interactions" value="1"/>
</dbReference>
<dbReference type="FunCoup" id="Q07287">
    <property type="interactions" value="160"/>
</dbReference>
<dbReference type="STRING" id="9823.ENSSSCP00000010814"/>
<dbReference type="GlyConnect" id="636">
    <property type="glycosylation" value="6 N-Linked glycans"/>
</dbReference>
<dbReference type="GlyCosmos" id="Q07287">
    <property type="glycosylation" value="7 sites, 10 glycans"/>
</dbReference>
<dbReference type="GlyGen" id="Q07287">
    <property type="glycosylation" value="9 sites, 10 N-linked glycans (1 site)"/>
</dbReference>
<dbReference type="iPTMnet" id="Q07287"/>
<dbReference type="PaxDb" id="9823-ENSSSCP00000010814"/>
<dbReference type="Ensembl" id="ENSSSCT00000011102.4">
    <property type="protein sequence ID" value="ENSSSCP00000010814.2"/>
    <property type="gene ID" value="ENSSSCG00000010141.4"/>
</dbReference>
<dbReference type="Ensembl" id="ENSSSCT00035038683.1">
    <property type="protein sequence ID" value="ENSSSCP00035015446.1"/>
    <property type="gene ID" value="ENSSSCG00035029218.1"/>
</dbReference>
<dbReference type="Ensembl" id="ENSSSCT00055028754.1">
    <property type="protein sequence ID" value="ENSSSCP00055022915.1"/>
    <property type="gene ID" value="ENSSSCG00055014571.1"/>
</dbReference>
<dbReference type="Ensembl" id="ENSSSCT00070036553.1">
    <property type="protein sequence ID" value="ENSSSCP00070030564.1"/>
    <property type="gene ID" value="ENSSSCG00070018498.1"/>
</dbReference>
<dbReference type="Ensembl" id="ENSSSCT00105041681">
    <property type="protein sequence ID" value="ENSSSCP00105029078"/>
    <property type="gene ID" value="ENSSSCG00105021843"/>
</dbReference>
<dbReference type="Ensembl" id="ENSSSCT00110015420">
    <property type="protein sequence ID" value="ENSSSCP00110010718"/>
    <property type="gene ID" value="ENSSSCG00110007949"/>
</dbReference>
<dbReference type="Ensembl" id="ENSSSCT00115019471">
    <property type="protein sequence ID" value="ENSSSCP00115018421"/>
    <property type="gene ID" value="ENSSSCG00115011288"/>
</dbReference>
<dbReference type="Ensembl" id="ENSSSCT00130022500">
    <property type="protein sequence ID" value="ENSSSCP00130015399"/>
    <property type="gene ID" value="ENSSSCG00130011749"/>
</dbReference>
<dbReference type="GeneID" id="397111"/>
<dbReference type="KEGG" id="ssc:397111"/>
<dbReference type="CTD" id="57829"/>
<dbReference type="VGNC" id="VGNC:95319">
    <property type="gene designation" value="ZP4"/>
</dbReference>
<dbReference type="eggNOG" id="ENOG502QU54">
    <property type="taxonomic scope" value="Eukaryota"/>
</dbReference>
<dbReference type="GeneTree" id="ENSGT00940000161324"/>
<dbReference type="HOGENOM" id="CLU_034433_0_0_1"/>
<dbReference type="InParanoid" id="Q07287"/>
<dbReference type="OMA" id="LNCPDQT"/>
<dbReference type="OrthoDB" id="8919081at2759"/>
<dbReference type="TreeFam" id="TF332794"/>
<dbReference type="Reactome" id="R-SSC-2534343">
    <property type="pathway name" value="Interaction With Cumulus Cells And The Zona Pellucida"/>
</dbReference>
<dbReference type="Proteomes" id="UP000008227">
    <property type="component" value="Chromosome 14"/>
</dbReference>
<dbReference type="Proteomes" id="UP000314985">
    <property type="component" value="Chromosome 14"/>
</dbReference>
<dbReference type="Proteomes" id="UP000694570">
    <property type="component" value="Unplaced"/>
</dbReference>
<dbReference type="Proteomes" id="UP000694571">
    <property type="component" value="Unplaced"/>
</dbReference>
<dbReference type="Proteomes" id="UP000694720">
    <property type="component" value="Unplaced"/>
</dbReference>
<dbReference type="Proteomes" id="UP000694722">
    <property type="component" value="Unplaced"/>
</dbReference>
<dbReference type="Proteomes" id="UP000694723">
    <property type="component" value="Unplaced"/>
</dbReference>
<dbReference type="Proteomes" id="UP000694724">
    <property type="component" value="Unplaced"/>
</dbReference>
<dbReference type="Proteomes" id="UP000694725">
    <property type="component" value="Unplaced"/>
</dbReference>
<dbReference type="Proteomes" id="UP000694726">
    <property type="component" value="Unplaced"/>
</dbReference>
<dbReference type="Proteomes" id="UP000694727">
    <property type="component" value="Unplaced"/>
</dbReference>
<dbReference type="Proteomes" id="UP000694728">
    <property type="component" value="Unplaced"/>
</dbReference>
<dbReference type="Bgee" id="ENSSSCG00000010141">
    <property type="expression patterns" value="Expressed in oocyte and 3 other cell types or tissues"/>
</dbReference>
<dbReference type="GO" id="GO:0062023">
    <property type="term" value="C:collagen-containing extracellular matrix"/>
    <property type="evidence" value="ECO:0000318"/>
    <property type="project" value="GO_Central"/>
</dbReference>
<dbReference type="GO" id="GO:0035805">
    <property type="term" value="C:egg coat"/>
    <property type="evidence" value="ECO:0000250"/>
    <property type="project" value="UniProtKB"/>
</dbReference>
<dbReference type="GO" id="GO:0005576">
    <property type="term" value="C:extracellular region"/>
    <property type="evidence" value="ECO:0007669"/>
    <property type="project" value="UniProtKB-KW"/>
</dbReference>
<dbReference type="GO" id="GO:0005886">
    <property type="term" value="C:plasma membrane"/>
    <property type="evidence" value="ECO:0007669"/>
    <property type="project" value="UniProtKB-SubCell"/>
</dbReference>
<dbReference type="GO" id="GO:0032190">
    <property type="term" value="F:acrosin binding"/>
    <property type="evidence" value="ECO:0000318"/>
    <property type="project" value="GO_Central"/>
</dbReference>
<dbReference type="GO" id="GO:0042802">
    <property type="term" value="F:identical protein binding"/>
    <property type="evidence" value="ECO:0007669"/>
    <property type="project" value="Ensembl"/>
</dbReference>
<dbReference type="GO" id="GO:0035804">
    <property type="term" value="F:structural constituent of egg coat"/>
    <property type="evidence" value="ECO:0000250"/>
    <property type="project" value="UniProtKB"/>
</dbReference>
<dbReference type="GO" id="GO:0060478">
    <property type="term" value="P:acrosomal vesicle exocytosis"/>
    <property type="evidence" value="ECO:0007669"/>
    <property type="project" value="Ensembl"/>
</dbReference>
<dbReference type="GO" id="GO:0007339">
    <property type="term" value="P:binding of sperm to zona pellucida"/>
    <property type="evidence" value="ECO:0000318"/>
    <property type="project" value="GO_Central"/>
</dbReference>
<dbReference type="GO" id="GO:2000360">
    <property type="term" value="P:negative regulation of binding of sperm to zona pellucida"/>
    <property type="evidence" value="ECO:0007669"/>
    <property type="project" value="Ensembl"/>
</dbReference>
<dbReference type="GO" id="GO:2000344">
    <property type="term" value="P:positive regulation of acrosome reaction"/>
    <property type="evidence" value="ECO:0007669"/>
    <property type="project" value="Ensembl"/>
</dbReference>
<dbReference type="GO" id="GO:0002922">
    <property type="term" value="P:positive regulation of humoral immune response"/>
    <property type="evidence" value="ECO:0007669"/>
    <property type="project" value="Ensembl"/>
</dbReference>
<dbReference type="GO" id="GO:0042102">
    <property type="term" value="P:positive regulation of T cell proliferation"/>
    <property type="evidence" value="ECO:0007669"/>
    <property type="project" value="Ensembl"/>
</dbReference>
<dbReference type="GO" id="GO:0060468">
    <property type="term" value="P:prevention of polyspermy"/>
    <property type="evidence" value="ECO:0000318"/>
    <property type="project" value="GO_Central"/>
</dbReference>
<dbReference type="CDD" id="cd00111">
    <property type="entry name" value="Trefoil"/>
    <property type="match status" value="1"/>
</dbReference>
<dbReference type="FunFam" id="2.60.40.4100:FF:000004">
    <property type="entry name" value="Zona pellucida sperm-binding protein 2"/>
    <property type="match status" value="1"/>
</dbReference>
<dbReference type="FunFam" id="4.10.110.10:FF:000004">
    <property type="entry name" value="zona pellucida sperm-binding protein 4 isoform X1"/>
    <property type="match status" value="1"/>
</dbReference>
<dbReference type="Gene3D" id="4.10.110.10">
    <property type="entry name" value="Spasmolytic Protein, domain 1"/>
    <property type="match status" value="1"/>
</dbReference>
<dbReference type="Gene3D" id="2.60.40.4100">
    <property type="entry name" value="Zona pellucida, ZP-C domain"/>
    <property type="match status" value="1"/>
</dbReference>
<dbReference type="Gene3D" id="2.60.40.3210">
    <property type="entry name" value="Zona pellucida, ZP-N domain"/>
    <property type="match status" value="1"/>
</dbReference>
<dbReference type="InterPro" id="IPR017957">
    <property type="entry name" value="P_trefoil_CS"/>
</dbReference>
<dbReference type="InterPro" id="IPR000519">
    <property type="entry name" value="P_trefoil_dom"/>
</dbReference>
<dbReference type="InterPro" id="IPR044913">
    <property type="entry name" value="P_trefoil_dom_sf"/>
</dbReference>
<dbReference type="InterPro" id="IPR051148">
    <property type="entry name" value="Zona_Pellucida_Domain_gp"/>
</dbReference>
<dbReference type="InterPro" id="IPR055355">
    <property type="entry name" value="ZP-C"/>
</dbReference>
<dbReference type="InterPro" id="IPR042235">
    <property type="entry name" value="ZP-C_dom"/>
</dbReference>
<dbReference type="InterPro" id="IPR055356">
    <property type="entry name" value="ZP-N"/>
</dbReference>
<dbReference type="InterPro" id="IPR054554">
    <property type="entry name" value="ZP1/4_Ig-like"/>
</dbReference>
<dbReference type="InterPro" id="IPR001507">
    <property type="entry name" value="ZP_dom"/>
</dbReference>
<dbReference type="InterPro" id="IPR017977">
    <property type="entry name" value="ZP_dom_CS"/>
</dbReference>
<dbReference type="PANTHER" id="PTHR23343">
    <property type="entry name" value="ZONA PELLUCIDA SPERM-BINDING PROTEIN"/>
    <property type="match status" value="1"/>
</dbReference>
<dbReference type="PANTHER" id="PTHR23343:SF31">
    <property type="entry name" value="ZONA PELLUCIDA SPERM-BINDING PROTEIN 4"/>
    <property type="match status" value="1"/>
</dbReference>
<dbReference type="Pfam" id="PF00088">
    <property type="entry name" value="Trefoil"/>
    <property type="match status" value="1"/>
</dbReference>
<dbReference type="Pfam" id="PF00100">
    <property type="entry name" value="Zona_pellucida"/>
    <property type="match status" value="1"/>
</dbReference>
<dbReference type="Pfam" id="PF23344">
    <property type="entry name" value="ZP-N"/>
    <property type="match status" value="1"/>
</dbReference>
<dbReference type="Pfam" id="PF22821">
    <property type="entry name" value="ZP1_ZP4_Ig-like"/>
    <property type="match status" value="1"/>
</dbReference>
<dbReference type="SMART" id="SM00018">
    <property type="entry name" value="PD"/>
    <property type="match status" value="1"/>
</dbReference>
<dbReference type="SMART" id="SM00241">
    <property type="entry name" value="ZP"/>
    <property type="match status" value="1"/>
</dbReference>
<dbReference type="SUPFAM" id="SSF57492">
    <property type="entry name" value="Trefoil"/>
    <property type="match status" value="1"/>
</dbReference>
<dbReference type="PROSITE" id="PS00025">
    <property type="entry name" value="P_TREFOIL_1"/>
    <property type="match status" value="1"/>
</dbReference>
<dbReference type="PROSITE" id="PS51448">
    <property type="entry name" value="P_TREFOIL_2"/>
    <property type="match status" value="1"/>
</dbReference>
<dbReference type="PROSITE" id="PS00682">
    <property type="entry name" value="ZP_1"/>
    <property type="match status" value="1"/>
</dbReference>
<dbReference type="PROSITE" id="PS51034">
    <property type="entry name" value="ZP_2"/>
    <property type="match status" value="1"/>
</dbReference>